<name>YO32_BPHC1</name>
<sequence length="200" mass="23327">MKVYFLKENLNSYQIFPIPQNLNDFVEMEVENESELETKQLINFKSQYILVDRQPTELHIWNGNSWVIDEEKQTEVKRELIKRLVDSIDDTAASISAKWTRFSEEYKERESAALAFKEANFTGEVSIYISSLATVAGLDNKSATLLILKQAEGLRTLQEQLAAQRMRKYELKHEELSEEELQQIHNDIIRKMKALAEVQQ</sequence>
<protein>
    <recommendedName>
        <fullName>Uncharacterized 23.3 kDa protein in lys 3'region</fullName>
    </recommendedName>
    <alternativeName>
        <fullName>ORF32</fullName>
    </alternativeName>
</protein>
<organism>
    <name type="scientific">Haemophilus phage HP1 (strain HP1c1)</name>
    <name type="common">Bacteriophage HP1</name>
    <dbReference type="NCBI Taxonomy" id="1289570"/>
    <lineage>
        <taxon>Viruses</taxon>
        <taxon>Duplodnaviria</taxon>
        <taxon>Heunggongvirae</taxon>
        <taxon>Uroviricota</taxon>
        <taxon>Caudoviricetes</taxon>
        <taxon>Peduoviridae</taxon>
        <taxon>Hpunavirus</taxon>
        <taxon>Haemophilus phage HP1</taxon>
    </lineage>
</organism>
<reference key="1">
    <citation type="journal article" date="1996" name="Nucleic Acids Res.">
        <title>The complete nucleotide sequence of bacteriophage HP1 DNA.</title>
        <authorList>
            <person name="Esposito D."/>
            <person name="Fitzmaurice W.P."/>
            <person name="Benjamin R.C."/>
            <person name="Goodman S.D."/>
            <person name="Waldman A.S."/>
            <person name="Scocca J.J."/>
        </authorList>
    </citation>
    <scope>NUCLEOTIDE SEQUENCE [LARGE SCALE GENOMIC DNA]</scope>
</reference>
<organismHost>
    <name type="scientific">Haemophilus influenzae</name>
    <dbReference type="NCBI Taxonomy" id="727"/>
</organismHost>
<accession>P51736</accession>
<proteinExistence type="predicted"/>
<feature type="chain" id="PRO_0000165341" description="Uncharacterized 23.3 kDa protein in lys 3'region">
    <location>
        <begin position="1"/>
        <end position="200"/>
    </location>
</feature>
<keyword id="KW-1185">Reference proteome</keyword>
<dbReference type="EMBL" id="U24159">
    <property type="protein sequence ID" value="AAB09219.1"/>
    <property type="molecule type" value="Genomic_DNA"/>
</dbReference>
<dbReference type="PIR" id="S69540">
    <property type="entry name" value="S69540"/>
</dbReference>
<dbReference type="RefSeq" id="NP_043503.1">
    <property type="nucleotide sequence ID" value="NC_001697.1"/>
</dbReference>
<dbReference type="GeneID" id="1261111"/>
<dbReference type="KEGG" id="vg:1261111"/>
<dbReference type="Proteomes" id="UP000001713">
    <property type="component" value="Segment"/>
</dbReference>